<feature type="chain" id="PRO_0000292037" description="Protein N-lysine methyltransferase METTL21A">
    <location>
        <begin position="1"/>
        <end position="215"/>
    </location>
</feature>
<feature type="binding site" evidence="1">
    <location>
        <position position="47"/>
    </location>
    <ligand>
        <name>S-adenosyl-L-methionine</name>
        <dbReference type="ChEBI" id="CHEBI:59789"/>
    </ligand>
</feature>
<feature type="binding site" evidence="1">
    <location>
        <begin position="73"/>
        <end position="75"/>
    </location>
    <ligand>
        <name>S-adenosyl-L-methionine</name>
        <dbReference type="ChEBI" id="CHEBI:59789"/>
    </ligand>
</feature>
<feature type="binding site" evidence="1">
    <location>
        <position position="94"/>
    </location>
    <ligand>
        <name>S-adenosyl-L-methionine</name>
        <dbReference type="ChEBI" id="CHEBI:59789"/>
    </ligand>
</feature>
<feature type="binding site" evidence="1">
    <location>
        <position position="125"/>
    </location>
    <ligand>
        <name>S-adenosyl-L-methionine</name>
        <dbReference type="ChEBI" id="CHEBI:59789"/>
    </ligand>
</feature>
<feature type="binding site" evidence="1">
    <location>
        <position position="141"/>
    </location>
    <ligand>
        <name>S-adenosyl-L-methionine</name>
        <dbReference type="ChEBI" id="CHEBI:59789"/>
    </ligand>
</feature>
<protein>
    <recommendedName>
        <fullName>Protein N-lysine methyltransferase METTL21A</fullName>
        <ecNumber evidence="1">2.1.1.-</ecNumber>
    </recommendedName>
    <alternativeName>
        <fullName>Methyltransferase-like protein 21A</fullName>
    </alternativeName>
</protein>
<gene>
    <name type="primary">mettl21a</name>
    <name type="synonym">Fam119a</name>
</gene>
<accession>A4IGU3</accession>
<proteinExistence type="evidence at transcript level"/>
<comment type="function">
    <text evidence="1">Protein-lysine methyltransferase that selectively trimethylates residues in heat shock protein 70 (HSP70) family members.</text>
</comment>
<comment type="catalytic activity">
    <reaction evidence="1">
        <text>L-lysyl-[protein] + 3 S-adenosyl-L-methionine = N(6),N(6),N(6)-trimethyl-L-lysyl-[protein] + 3 S-adenosyl-L-homocysteine + 3 H(+)</text>
        <dbReference type="Rhea" id="RHEA:54192"/>
        <dbReference type="Rhea" id="RHEA-COMP:9752"/>
        <dbReference type="Rhea" id="RHEA-COMP:13826"/>
        <dbReference type="ChEBI" id="CHEBI:15378"/>
        <dbReference type="ChEBI" id="CHEBI:29969"/>
        <dbReference type="ChEBI" id="CHEBI:57856"/>
        <dbReference type="ChEBI" id="CHEBI:59789"/>
        <dbReference type="ChEBI" id="CHEBI:61961"/>
    </reaction>
    <physiologicalReaction direction="left-to-right" evidence="1">
        <dbReference type="Rhea" id="RHEA:54193"/>
    </physiologicalReaction>
</comment>
<comment type="subcellular location">
    <subcellularLocation>
        <location evidence="1">Cytoplasm</location>
    </subcellularLocation>
</comment>
<comment type="similarity">
    <text evidence="2">Belongs to the methyltransferase superfamily. METTL21 family.</text>
</comment>
<name>MT21A_XENTR</name>
<sequence>MALVPYTDSGVQSLKRFHDSSASFKFVNHNIEIKQDWKQLGVAAVVWDAALVLCMYLESEGIHLQNSSVIELGAGTGLVGIVAALLGAQVTITDRDLAMEFLRMNVRDNIPKDSLHRVSVRALNWGKSLEEFSTYDFILGADIIYLEETFPDLLQTFLHLSSQQSVILLSSRLRYQRDHDFLEMMKLHFTIADVYYDKNTDVHIFRAQLRQRKEL</sequence>
<dbReference type="EC" id="2.1.1.-" evidence="1"/>
<dbReference type="EMBL" id="BC135248">
    <property type="protein sequence ID" value="AAI35249.1"/>
    <property type="molecule type" value="mRNA"/>
</dbReference>
<dbReference type="RefSeq" id="NP_001090861.1">
    <property type="nucleotide sequence ID" value="NM_001097392.1"/>
</dbReference>
<dbReference type="SMR" id="A4IGU3"/>
<dbReference type="FunCoup" id="A4IGU3">
    <property type="interactions" value="1898"/>
</dbReference>
<dbReference type="STRING" id="8364.ENSXETP00000029481"/>
<dbReference type="PaxDb" id="8364-ENSXETP00000035774"/>
<dbReference type="DNASU" id="100038275"/>
<dbReference type="GeneID" id="100038275"/>
<dbReference type="KEGG" id="xtr:100038275"/>
<dbReference type="AGR" id="Xenbase:XB-GENE-5860641"/>
<dbReference type="CTD" id="151194"/>
<dbReference type="Xenbase" id="XB-GENE-5860641">
    <property type="gene designation" value="mettl21a"/>
</dbReference>
<dbReference type="eggNOG" id="KOG2793">
    <property type="taxonomic scope" value="Eukaryota"/>
</dbReference>
<dbReference type="HOGENOM" id="CLU_055721_4_2_1"/>
<dbReference type="InParanoid" id="A4IGU3"/>
<dbReference type="OMA" id="LFWELCD"/>
<dbReference type="OrthoDB" id="413520at2759"/>
<dbReference type="PhylomeDB" id="A4IGU3"/>
<dbReference type="TreeFam" id="TF313206"/>
<dbReference type="Reactome" id="R-XTR-8876725">
    <property type="pathway name" value="Protein methylation"/>
</dbReference>
<dbReference type="Proteomes" id="UP000008143">
    <property type="component" value="Chromosome 9"/>
</dbReference>
<dbReference type="GO" id="GO:0005737">
    <property type="term" value="C:cytoplasm"/>
    <property type="evidence" value="ECO:0007669"/>
    <property type="project" value="UniProtKB-SubCell"/>
</dbReference>
<dbReference type="GO" id="GO:0016279">
    <property type="term" value="F:protein-lysine N-methyltransferase activity"/>
    <property type="evidence" value="ECO:0000250"/>
    <property type="project" value="UniProtKB"/>
</dbReference>
<dbReference type="GO" id="GO:0006479">
    <property type="term" value="P:protein methylation"/>
    <property type="evidence" value="ECO:0000250"/>
    <property type="project" value="UniProtKB"/>
</dbReference>
<dbReference type="CDD" id="cd02440">
    <property type="entry name" value="AdoMet_MTases"/>
    <property type="match status" value="1"/>
</dbReference>
<dbReference type="Gene3D" id="3.40.50.150">
    <property type="entry name" value="Vaccinia Virus protein VP39"/>
    <property type="match status" value="1"/>
</dbReference>
<dbReference type="InterPro" id="IPR019410">
    <property type="entry name" value="Methyltransf_16"/>
</dbReference>
<dbReference type="InterPro" id="IPR029063">
    <property type="entry name" value="SAM-dependent_MTases_sf"/>
</dbReference>
<dbReference type="PANTHER" id="PTHR14614">
    <property type="entry name" value="HEPATOCELLULAR CARCINOMA-ASSOCIATED ANTIGEN"/>
    <property type="match status" value="1"/>
</dbReference>
<dbReference type="PANTHER" id="PTHR14614:SF14">
    <property type="entry name" value="PROTEIN N-LYSINE METHYLTRANSFERASE METTL21A"/>
    <property type="match status" value="1"/>
</dbReference>
<dbReference type="Pfam" id="PF10294">
    <property type="entry name" value="Methyltransf_16"/>
    <property type="match status" value="1"/>
</dbReference>
<dbReference type="SUPFAM" id="SSF53335">
    <property type="entry name" value="S-adenosyl-L-methionine-dependent methyltransferases"/>
    <property type="match status" value="1"/>
</dbReference>
<reference key="1">
    <citation type="submission" date="2007-03" db="EMBL/GenBank/DDBJ databases">
        <authorList>
            <consortium name="NIH - Xenopus Gene Collection (XGC) project"/>
        </authorList>
    </citation>
    <scope>NUCLEOTIDE SEQUENCE [LARGE SCALE MRNA]</scope>
    <source>
        <tissue>Embryo</tissue>
    </source>
</reference>
<evidence type="ECO:0000250" key="1">
    <source>
        <dbReference type="UniProtKB" id="Q8WXB1"/>
    </source>
</evidence>
<evidence type="ECO:0000305" key="2"/>
<keyword id="KW-0963">Cytoplasm</keyword>
<keyword id="KW-0489">Methyltransferase</keyword>
<keyword id="KW-1185">Reference proteome</keyword>
<keyword id="KW-0949">S-adenosyl-L-methionine</keyword>
<keyword id="KW-0808">Transferase</keyword>
<organism>
    <name type="scientific">Xenopus tropicalis</name>
    <name type="common">Western clawed frog</name>
    <name type="synonym">Silurana tropicalis</name>
    <dbReference type="NCBI Taxonomy" id="8364"/>
    <lineage>
        <taxon>Eukaryota</taxon>
        <taxon>Metazoa</taxon>
        <taxon>Chordata</taxon>
        <taxon>Craniata</taxon>
        <taxon>Vertebrata</taxon>
        <taxon>Euteleostomi</taxon>
        <taxon>Amphibia</taxon>
        <taxon>Batrachia</taxon>
        <taxon>Anura</taxon>
        <taxon>Pipoidea</taxon>
        <taxon>Pipidae</taxon>
        <taxon>Xenopodinae</taxon>
        <taxon>Xenopus</taxon>
        <taxon>Silurana</taxon>
    </lineage>
</organism>